<protein>
    <recommendedName>
        <fullName evidence="6">Nucleoporin NUP35</fullName>
    </recommendedName>
    <alternativeName>
        <fullName>35 kDa nucleoporin</fullName>
    </alternativeName>
    <alternativeName>
        <fullName>Mitotic phosphoprotein 44</fullName>
        <shortName>MP-44</shortName>
    </alternativeName>
    <alternativeName>
        <fullName>Nuclear pore complex protein Nup53</fullName>
    </alternativeName>
    <alternativeName>
        <fullName evidence="2">Nucleoporin NUP53</fullName>
    </alternativeName>
</protein>
<accession>Q8R4R6</accession>
<accession>A2ATJ3</accession>
<accession>Q9D7J2</accession>
<comment type="function">
    <text evidence="1">Functions as a component of the nuclear pore complex (NPC). NPC components, collectively referred to as nucleoporins (NUPs), can play the role of both NPC structural components and of docking or interaction partners for transiently associated nuclear transport factors. May play a role in the association of MAD1 with the NPC (By similarity).</text>
</comment>
<comment type="subunit">
    <text evidence="1">Interacts with TMEM48/NDC1. Forms a complex with NUP93, NUP155, NUP205 and lamin B; The interaction with NUP93 is direct.</text>
</comment>
<comment type="subcellular location">
    <subcellularLocation>
        <location evidence="2">Nucleus</location>
        <location evidence="2">Nuclear pore complex</location>
    </subcellularLocation>
    <subcellularLocation>
        <location evidence="2">Nucleus membrane</location>
        <topology evidence="2">Peripheral membrane protein</topology>
    </subcellularLocation>
    <text evidence="2">Tightly associated with the nuclear membrane and lamina.</text>
</comment>
<comment type="similarity">
    <text evidence="5">Belongs to the Nup35 family.</text>
</comment>
<gene>
    <name type="primary">Nup35</name>
    <name type="synonym">Mp44</name>
    <name type="synonym">Nup53</name>
</gene>
<dbReference type="EMBL" id="AF411517">
    <property type="protein sequence ID" value="AAL86380.1"/>
    <property type="molecule type" value="mRNA"/>
</dbReference>
<dbReference type="EMBL" id="AK009187">
    <property type="protein sequence ID" value="BAB26128.1"/>
    <property type="molecule type" value="mRNA"/>
</dbReference>
<dbReference type="EMBL" id="AK089997">
    <property type="protein sequence ID" value="BAC41034.1"/>
    <property type="molecule type" value="mRNA"/>
</dbReference>
<dbReference type="EMBL" id="AK136109">
    <property type="protein sequence ID" value="BAE22825.1"/>
    <property type="molecule type" value="mRNA"/>
</dbReference>
<dbReference type="EMBL" id="AK145775">
    <property type="protein sequence ID" value="BAE26644.1"/>
    <property type="molecule type" value="mRNA"/>
</dbReference>
<dbReference type="EMBL" id="AL928869">
    <property type="status" value="NOT_ANNOTATED_CDS"/>
    <property type="molecule type" value="Genomic_DNA"/>
</dbReference>
<dbReference type="EMBL" id="BC048814">
    <property type="protein sequence ID" value="AAH48814.1"/>
    <property type="molecule type" value="mRNA"/>
</dbReference>
<dbReference type="CCDS" id="CCDS16179.1"/>
<dbReference type="RefSeq" id="NP_001177108.1">
    <property type="nucleotide sequence ID" value="NM_001190179.1"/>
</dbReference>
<dbReference type="RefSeq" id="NP_081367.1">
    <property type="nucleotide sequence ID" value="NM_027091.4"/>
</dbReference>
<dbReference type="PDB" id="1WWH">
    <property type="method" value="X-ray"/>
    <property type="resolution" value="2.70 A"/>
    <property type="chains" value="A/B/C/D=156-261"/>
</dbReference>
<dbReference type="PDBsum" id="1WWH"/>
<dbReference type="SMR" id="Q8R4R6"/>
<dbReference type="BioGRID" id="213479">
    <property type="interactions" value="5"/>
</dbReference>
<dbReference type="ComplexPortal" id="CPX-4474">
    <property type="entry name" value="Nuclear pore complex"/>
</dbReference>
<dbReference type="FunCoup" id="Q8R4R6">
    <property type="interactions" value="3469"/>
</dbReference>
<dbReference type="IntAct" id="Q8R4R6">
    <property type="interactions" value="1"/>
</dbReference>
<dbReference type="MINT" id="Q8R4R6"/>
<dbReference type="STRING" id="10090.ENSMUSP00000028382"/>
<dbReference type="GlyGen" id="Q8R4R6">
    <property type="glycosylation" value="5 sites, 1 O-linked glycan (5 sites)"/>
</dbReference>
<dbReference type="iPTMnet" id="Q8R4R6"/>
<dbReference type="PhosphoSitePlus" id="Q8R4R6"/>
<dbReference type="SwissPalm" id="Q8R4R6"/>
<dbReference type="jPOST" id="Q8R4R6"/>
<dbReference type="PaxDb" id="10090-ENSMUSP00000028382"/>
<dbReference type="PeptideAtlas" id="Q8R4R6"/>
<dbReference type="ProteomicsDB" id="294250"/>
<dbReference type="Pumba" id="Q8R4R6"/>
<dbReference type="Antibodypedia" id="19771">
    <property type="antibodies" value="211 antibodies from 29 providers"/>
</dbReference>
<dbReference type="DNASU" id="69482"/>
<dbReference type="Ensembl" id="ENSMUST00000028382.13">
    <property type="protein sequence ID" value="ENSMUSP00000028382.7"/>
    <property type="gene ID" value="ENSMUSG00000026999.15"/>
</dbReference>
<dbReference type="GeneID" id="69482"/>
<dbReference type="KEGG" id="mmu:69482"/>
<dbReference type="UCSC" id="uc008khs.2">
    <property type="organism name" value="mouse"/>
</dbReference>
<dbReference type="AGR" id="MGI:1916732"/>
<dbReference type="CTD" id="129401"/>
<dbReference type="MGI" id="MGI:1916732">
    <property type="gene designation" value="Nup35"/>
</dbReference>
<dbReference type="VEuPathDB" id="HostDB:ENSMUSG00000026999"/>
<dbReference type="eggNOG" id="KOG4285">
    <property type="taxonomic scope" value="Eukaryota"/>
</dbReference>
<dbReference type="GeneTree" id="ENSGT00390000005923"/>
<dbReference type="HOGENOM" id="CLU_056189_0_0_1"/>
<dbReference type="InParanoid" id="Q8R4R6"/>
<dbReference type="OMA" id="DKENCNA"/>
<dbReference type="OrthoDB" id="3365060at2759"/>
<dbReference type="PhylomeDB" id="Q8R4R6"/>
<dbReference type="TreeFam" id="TF325369"/>
<dbReference type="Reactome" id="R-MMU-159227">
    <property type="pathway name" value="Transport of the SLBP independent Mature mRNA"/>
</dbReference>
<dbReference type="Reactome" id="R-MMU-159230">
    <property type="pathway name" value="Transport of the SLBP Dependant Mature mRNA"/>
</dbReference>
<dbReference type="Reactome" id="R-MMU-159231">
    <property type="pathway name" value="Transport of Mature mRNA Derived from an Intronless Transcript"/>
</dbReference>
<dbReference type="Reactome" id="R-MMU-159236">
    <property type="pathway name" value="Transport of Mature mRNA derived from an Intron-Containing Transcript"/>
</dbReference>
<dbReference type="Reactome" id="R-MMU-170822">
    <property type="pathway name" value="Regulation of Glucokinase by Glucokinase Regulatory Protein"/>
</dbReference>
<dbReference type="Reactome" id="R-MMU-191859">
    <property type="pathway name" value="snRNP Assembly"/>
</dbReference>
<dbReference type="Reactome" id="R-MMU-3108214">
    <property type="pathway name" value="SUMOylation of DNA damage response and repair proteins"/>
</dbReference>
<dbReference type="Reactome" id="R-MMU-3232142">
    <property type="pathway name" value="SUMOylation of ubiquitinylation proteins"/>
</dbReference>
<dbReference type="Reactome" id="R-MMU-3301854">
    <property type="pathway name" value="Nuclear Pore Complex (NPC) Disassembly"/>
</dbReference>
<dbReference type="Reactome" id="R-MMU-3371453">
    <property type="pathway name" value="Regulation of HSF1-mediated heat shock response"/>
</dbReference>
<dbReference type="Reactome" id="R-MMU-4085377">
    <property type="pathway name" value="SUMOylation of SUMOylation proteins"/>
</dbReference>
<dbReference type="Reactome" id="R-MMU-4551638">
    <property type="pathway name" value="SUMOylation of chromatin organization proteins"/>
</dbReference>
<dbReference type="Reactome" id="R-MMU-4570464">
    <property type="pathway name" value="SUMOylation of RNA binding proteins"/>
</dbReference>
<dbReference type="Reactome" id="R-MMU-4615885">
    <property type="pathway name" value="SUMOylation of DNA replication proteins"/>
</dbReference>
<dbReference type="Reactome" id="R-MMU-5578749">
    <property type="pathway name" value="Transcriptional regulation by small RNAs"/>
</dbReference>
<dbReference type="Reactome" id="R-MMU-9615933">
    <property type="pathway name" value="Postmitotic nuclear pore complex (NPC) reformation"/>
</dbReference>
<dbReference type="BioGRID-ORCS" id="69482">
    <property type="hits" value="8 hits in 81 CRISPR screens"/>
</dbReference>
<dbReference type="ChiTaRS" id="Nup35">
    <property type="organism name" value="mouse"/>
</dbReference>
<dbReference type="EvolutionaryTrace" id="Q8R4R6"/>
<dbReference type="PRO" id="PR:Q8R4R6"/>
<dbReference type="Proteomes" id="UP000000589">
    <property type="component" value="Chromosome 2"/>
</dbReference>
<dbReference type="RNAct" id="Q8R4R6">
    <property type="molecule type" value="protein"/>
</dbReference>
<dbReference type="Bgee" id="ENSMUSG00000026999">
    <property type="expression patterns" value="Expressed in secondary oocyte and 65 other cell types or tissues"/>
</dbReference>
<dbReference type="ExpressionAtlas" id="Q8R4R6">
    <property type="expression patterns" value="baseline and differential"/>
</dbReference>
<dbReference type="GO" id="GO:0005635">
    <property type="term" value="C:nuclear envelope"/>
    <property type="evidence" value="ECO:0000266"/>
    <property type="project" value="ComplexPortal"/>
</dbReference>
<dbReference type="GO" id="GO:0031965">
    <property type="term" value="C:nuclear membrane"/>
    <property type="evidence" value="ECO:0007669"/>
    <property type="project" value="UniProtKB-SubCell"/>
</dbReference>
<dbReference type="GO" id="GO:0005643">
    <property type="term" value="C:nuclear pore"/>
    <property type="evidence" value="ECO:0000303"/>
    <property type="project" value="ComplexPortal"/>
</dbReference>
<dbReference type="GO" id="GO:0005654">
    <property type="term" value="C:nucleoplasm"/>
    <property type="evidence" value="ECO:0007669"/>
    <property type="project" value="Ensembl"/>
</dbReference>
<dbReference type="GO" id="GO:0005886">
    <property type="term" value="C:plasma membrane"/>
    <property type="evidence" value="ECO:0007669"/>
    <property type="project" value="Ensembl"/>
</dbReference>
<dbReference type="GO" id="GO:0042802">
    <property type="term" value="F:identical protein binding"/>
    <property type="evidence" value="ECO:0000353"/>
    <property type="project" value="MGI"/>
</dbReference>
<dbReference type="GO" id="GO:0003676">
    <property type="term" value="F:nucleic acid binding"/>
    <property type="evidence" value="ECO:0007669"/>
    <property type="project" value="InterPro"/>
</dbReference>
<dbReference type="GO" id="GO:0017056">
    <property type="term" value="F:structural constituent of nuclear pore"/>
    <property type="evidence" value="ECO:0007669"/>
    <property type="project" value="InterPro"/>
</dbReference>
<dbReference type="GO" id="GO:1990830">
    <property type="term" value="P:cellular response to leukemia inhibitory factor"/>
    <property type="evidence" value="ECO:0000270"/>
    <property type="project" value="MGI"/>
</dbReference>
<dbReference type="GO" id="GO:0051028">
    <property type="term" value="P:mRNA transport"/>
    <property type="evidence" value="ECO:0007669"/>
    <property type="project" value="UniProtKB-KW"/>
</dbReference>
<dbReference type="GO" id="GO:0006913">
    <property type="term" value="P:nucleocytoplasmic transport"/>
    <property type="evidence" value="ECO:0000303"/>
    <property type="project" value="ComplexPortal"/>
</dbReference>
<dbReference type="GO" id="GO:0015031">
    <property type="term" value="P:protein transport"/>
    <property type="evidence" value="ECO:0007669"/>
    <property type="project" value="UniProtKB-KW"/>
</dbReference>
<dbReference type="CDD" id="cd12722">
    <property type="entry name" value="RRM_Nup53"/>
    <property type="match status" value="1"/>
</dbReference>
<dbReference type="FunFam" id="3.30.70.330:FF:000095">
    <property type="entry name" value="Putative Nucleoporin NUP53"/>
    <property type="match status" value="1"/>
</dbReference>
<dbReference type="Gene3D" id="3.30.70.330">
    <property type="match status" value="1"/>
</dbReference>
<dbReference type="InterPro" id="IPR017389">
    <property type="entry name" value="Nucleoporin_NUP53"/>
</dbReference>
<dbReference type="InterPro" id="IPR012677">
    <property type="entry name" value="Nucleotide-bd_a/b_plait_sf"/>
</dbReference>
<dbReference type="InterPro" id="IPR035979">
    <property type="entry name" value="RBD_domain_sf"/>
</dbReference>
<dbReference type="InterPro" id="IPR007846">
    <property type="entry name" value="RRM_NUP35_dom"/>
</dbReference>
<dbReference type="PANTHER" id="PTHR21527">
    <property type="entry name" value="NUCLEOPORIN NUP35"/>
    <property type="match status" value="1"/>
</dbReference>
<dbReference type="PANTHER" id="PTHR21527:SF6">
    <property type="entry name" value="NUCLEOPORIN NUP35"/>
    <property type="match status" value="1"/>
</dbReference>
<dbReference type="Pfam" id="PF05172">
    <property type="entry name" value="RRM_Nup35"/>
    <property type="match status" value="1"/>
</dbReference>
<dbReference type="PIRSF" id="PIRSF038119">
    <property type="entry name" value="Nucleoporin_NUP53"/>
    <property type="match status" value="1"/>
</dbReference>
<dbReference type="SUPFAM" id="SSF54928">
    <property type="entry name" value="RNA-binding domain, RBD"/>
    <property type="match status" value="1"/>
</dbReference>
<dbReference type="PROSITE" id="PS51472">
    <property type="entry name" value="RRM_NUP35"/>
    <property type="match status" value="1"/>
</dbReference>
<organism>
    <name type="scientific">Mus musculus</name>
    <name type="common">Mouse</name>
    <dbReference type="NCBI Taxonomy" id="10090"/>
    <lineage>
        <taxon>Eukaryota</taxon>
        <taxon>Metazoa</taxon>
        <taxon>Chordata</taxon>
        <taxon>Craniata</taxon>
        <taxon>Vertebrata</taxon>
        <taxon>Euteleostomi</taxon>
        <taxon>Mammalia</taxon>
        <taxon>Eutheria</taxon>
        <taxon>Euarchontoglires</taxon>
        <taxon>Glires</taxon>
        <taxon>Rodentia</taxon>
        <taxon>Myomorpha</taxon>
        <taxon>Muroidea</taxon>
        <taxon>Muridae</taxon>
        <taxon>Murinae</taxon>
        <taxon>Mus</taxon>
        <taxon>Mus</taxon>
    </lineage>
</organism>
<keyword id="KW-0002">3D-structure</keyword>
<keyword id="KW-0903">Direct protein sequencing</keyword>
<keyword id="KW-0472">Membrane</keyword>
<keyword id="KW-0509">mRNA transport</keyword>
<keyword id="KW-0906">Nuclear pore complex</keyword>
<keyword id="KW-0539">Nucleus</keyword>
<keyword id="KW-0597">Phosphoprotein</keyword>
<keyword id="KW-0653">Protein transport</keyword>
<keyword id="KW-1185">Reference proteome</keyword>
<keyword id="KW-0811">Translocation</keyword>
<keyword id="KW-0813">Transport</keyword>
<sequence>MAAFAVDPQAPTLGSEPMMLGSPTSPKTGANAQFLPGFLMGDLPAPVTPQPRSISGPSVGVMEMRSPLLAGGSPPQPVVPAHKDKSGAPPVRSIYDDISSPGLGSTPLTSRRQANISLLQSPLVGATTPVPGQSMFSPANIGQPRKTTLSPAQLDPFYTQGDSLTSEDHLDDTWVTVFGFPQASASYILLQFAQYGNILKHVMSNTGNWMHIRYQSKLQARKALSKDGRIFGESIMIGVKPCIDKNVMENSDRGVLSSPSLAFTTPIRTLGTPTQSGSTPRVSTMRPLATAYKASTSDYQVISDRQTPKKDESLVSRAMEYMFGW</sequence>
<evidence type="ECO:0000250" key="1"/>
<evidence type="ECO:0000250" key="2">
    <source>
        <dbReference type="UniProtKB" id="Q8NFH5"/>
    </source>
</evidence>
<evidence type="ECO:0000255" key="3">
    <source>
        <dbReference type="PROSITE-ProRule" id="PRU00804"/>
    </source>
</evidence>
<evidence type="ECO:0000256" key="4">
    <source>
        <dbReference type="SAM" id="MobiDB-lite"/>
    </source>
</evidence>
<evidence type="ECO:0000305" key="5"/>
<evidence type="ECO:0000312" key="6">
    <source>
        <dbReference type="MGI" id="MGI:1916732"/>
    </source>
</evidence>
<evidence type="ECO:0007744" key="7">
    <source>
    </source>
</evidence>
<evidence type="ECO:0007744" key="8">
    <source>
    </source>
</evidence>
<evidence type="ECO:0007829" key="9">
    <source>
        <dbReference type="PDB" id="1WWH"/>
    </source>
</evidence>
<feature type="chain" id="PRO_0000234295" description="Nucleoporin NUP35">
    <location>
        <begin position="1"/>
        <end position="325"/>
    </location>
</feature>
<feature type="domain" description="RRM Nup35-type" evidence="3">
    <location>
        <begin position="169"/>
        <end position="249"/>
    </location>
</feature>
<feature type="region of interest" description="Disordered" evidence="4">
    <location>
        <begin position="65"/>
        <end position="92"/>
    </location>
</feature>
<feature type="modified residue" description="Phosphoserine" evidence="2">
    <location>
        <position position="53"/>
    </location>
</feature>
<feature type="modified residue" description="Phosphoserine" evidence="2">
    <location>
        <position position="55"/>
    </location>
</feature>
<feature type="modified residue" description="Phosphoserine" evidence="8">
    <location>
        <position position="66"/>
    </location>
</feature>
<feature type="modified residue" description="Phosphoserine" evidence="2">
    <location>
        <position position="73"/>
    </location>
</feature>
<feature type="modified residue" description="Phosphoserine" evidence="2">
    <location>
        <position position="99"/>
    </location>
</feature>
<feature type="modified residue" description="Phosphoserine" evidence="8">
    <location>
        <position position="100"/>
    </location>
</feature>
<feature type="modified residue" description="Phosphothreonine" evidence="2">
    <location>
        <position position="106"/>
    </location>
</feature>
<feature type="modified residue" description="Phosphoserine" evidence="2">
    <location>
        <position position="121"/>
    </location>
</feature>
<feature type="modified residue" description="Phosphothreonine" evidence="2">
    <location>
        <position position="128"/>
    </location>
</feature>
<feature type="modified residue" description="Phosphoserine" evidence="2">
    <location>
        <position position="137"/>
    </location>
</feature>
<feature type="modified residue" description="Phosphoserine" evidence="8">
    <location>
        <position position="251"/>
    </location>
</feature>
<feature type="modified residue" description="Phosphoserine" evidence="7 8">
    <location>
        <position position="258"/>
    </location>
</feature>
<feature type="modified residue" description="Phosphothreonine" evidence="2">
    <location>
        <position position="264"/>
    </location>
</feature>
<feature type="modified residue" description="Phosphothreonine" evidence="8">
    <location>
        <position position="265"/>
    </location>
</feature>
<feature type="modified residue" description="Phosphothreonine" evidence="2">
    <location>
        <position position="272"/>
    </location>
</feature>
<feature type="modified residue" description="Phosphothreonine" evidence="2">
    <location>
        <position position="274"/>
    </location>
</feature>
<feature type="modified residue" description="Phosphoserine" evidence="2">
    <location>
        <position position="278"/>
    </location>
</feature>
<feature type="modified residue" description="Phosphothreonine" evidence="2">
    <location>
        <position position="279"/>
    </location>
</feature>
<feature type="modified residue" description="Phosphoserine" evidence="2">
    <location>
        <position position="283"/>
    </location>
</feature>
<feature type="modified residue" description="Phosphothreonine" evidence="2">
    <location>
        <position position="307"/>
    </location>
</feature>
<feature type="sequence conflict" description="In Ref. 1; AAL86380." evidence="5" ref="1">
    <original>L</original>
    <variation>V</variation>
    <location>
        <position position="13"/>
    </location>
</feature>
<feature type="helix" evidence="9">
    <location>
        <begin position="170"/>
        <end position="173"/>
    </location>
</feature>
<feature type="strand" evidence="9">
    <location>
        <begin position="174"/>
        <end position="178"/>
    </location>
</feature>
<feature type="helix" evidence="9">
    <location>
        <begin position="182"/>
        <end position="184"/>
    </location>
</feature>
<feature type="helix" evidence="9">
    <location>
        <begin position="185"/>
        <end position="193"/>
    </location>
</feature>
<feature type="strand" evidence="9">
    <location>
        <begin position="198"/>
        <end position="203"/>
    </location>
</feature>
<feature type="strand" evidence="9">
    <location>
        <begin position="205"/>
        <end position="216"/>
    </location>
</feature>
<feature type="helix" evidence="9">
    <location>
        <begin position="217"/>
        <end position="224"/>
    </location>
</feature>
<feature type="turn" evidence="9">
    <location>
        <begin position="225"/>
        <end position="228"/>
    </location>
</feature>
<feature type="turn" evidence="9">
    <location>
        <begin position="232"/>
        <end position="234"/>
    </location>
</feature>
<feature type="strand" evidence="9">
    <location>
        <begin position="238"/>
        <end position="241"/>
    </location>
</feature>
<feature type="helix" evidence="9">
    <location>
        <begin position="245"/>
        <end position="248"/>
    </location>
</feature>
<name>NUP35_MOUSE</name>
<proteinExistence type="evidence at protein level"/>
<reference key="1">
    <citation type="submission" date="2001-08" db="EMBL/GenBank/DDBJ databases">
        <title>Molecular cloning and expression analysis of human mitotic phosphoprotein 44 gene.</title>
        <authorList>
            <person name="Guo J.H."/>
            <person name="Yu L."/>
        </authorList>
    </citation>
    <scope>NUCLEOTIDE SEQUENCE [LARGE SCALE MRNA]</scope>
    <source>
        <strain>BALB/cJ</strain>
    </source>
</reference>
<reference key="2">
    <citation type="journal article" date="2005" name="Science">
        <title>The transcriptional landscape of the mammalian genome.</title>
        <authorList>
            <person name="Carninci P."/>
            <person name="Kasukawa T."/>
            <person name="Katayama S."/>
            <person name="Gough J."/>
            <person name="Frith M.C."/>
            <person name="Maeda N."/>
            <person name="Oyama R."/>
            <person name="Ravasi T."/>
            <person name="Lenhard B."/>
            <person name="Wells C."/>
            <person name="Kodzius R."/>
            <person name="Shimokawa K."/>
            <person name="Bajic V.B."/>
            <person name="Brenner S.E."/>
            <person name="Batalov S."/>
            <person name="Forrest A.R."/>
            <person name="Zavolan M."/>
            <person name="Davis M.J."/>
            <person name="Wilming L.G."/>
            <person name="Aidinis V."/>
            <person name="Allen J.E."/>
            <person name="Ambesi-Impiombato A."/>
            <person name="Apweiler R."/>
            <person name="Aturaliya R.N."/>
            <person name="Bailey T.L."/>
            <person name="Bansal M."/>
            <person name="Baxter L."/>
            <person name="Beisel K.W."/>
            <person name="Bersano T."/>
            <person name="Bono H."/>
            <person name="Chalk A.M."/>
            <person name="Chiu K.P."/>
            <person name="Choudhary V."/>
            <person name="Christoffels A."/>
            <person name="Clutterbuck D.R."/>
            <person name="Crowe M.L."/>
            <person name="Dalla E."/>
            <person name="Dalrymple B.P."/>
            <person name="de Bono B."/>
            <person name="Della Gatta G."/>
            <person name="di Bernardo D."/>
            <person name="Down T."/>
            <person name="Engstrom P."/>
            <person name="Fagiolini M."/>
            <person name="Faulkner G."/>
            <person name="Fletcher C.F."/>
            <person name="Fukushima T."/>
            <person name="Furuno M."/>
            <person name="Futaki S."/>
            <person name="Gariboldi M."/>
            <person name="Georgii-Hemming P."/>
            <person name="Gingeras T.R."/>
            <person name="Gojobori T."/>
            <person name="Green R.E."/>
            <person name="Gustincich S."/>
            <person name="Harbers M."/>
            <person name="Hayashi Y."/>
            <person name="Hensch T.K."/>
            <person name="Hirokawa N."/>
            <person name="Hill D."/>
            <person name="Huminiecki L."/>
            <person name="Iacono M."/>
            <person name="Ikeo K."/>
            <person name="Iwama A."/>
            <person name="Ishikawa T."/>
            <person name="Jakt M."/>
            <person name="Kanapin A."/>
            <person name="Katoh M."/>
            <person name="Kawasawa Y."/>
            <person name="Kelso J."/>
            <person name="Kitamura H."/>
            <person name="Kitano H."/>
            <person name="Kollias G."/>
            <person name="Krishnan S.P."/>
            <person name="Kruger A."/>
            <person name="Kummerfeld S.K."/>
            <person name="Kurochkin I.V."/>
            <person name="Lareau L.F."/>
            <person name="Lazarevic D."/>
            <person name="Lipovich L."/>
            <person name="Liu J."/>
            <person name="Liuni S."/>
            <person name="McWilliam S."/>
            <person name="Madan Babu M."/>
            <person name="Madera M."/>
            <person name="Marchionni L."/>
            <person name="Matsuda H."/>
            <person name="Matsuzawa S."/>
            <person name="Miki H."/>
            <person name="Mignone F."/>
            <person name="Miyake S."/>
            <person name="Morris K."/>
            <person name="Mottagui-Tabar S."/>
            <person name="Mulder N."/>
            <person name="Nakano N."/>
            <person name="Nakauchi H."/>
            <person name="Ng P."/>
            <person name="Nilsson R."/>
            <person name="Nishiguchi S."/>
            <person name="Nishikawa S."/>
            <person name="Nori F."/>
            <person name="Ohara O."/>
            <person name="Okazaki Y."/>
            <person name="Orlando V."/>
            <person name="Pang K.C."/>
            <person name="Pavan W.J."/>
            <person name="Pavesi G."/>
            <person name="Pesole G."/>
            <person name="Petrovsky N."/>
            <person name="Piazza S."/>
            <person name="Reed J."/>
            <person name="Reid J.F."/>
            <person name="Ring B.Z."/>
            <person name="Ringwald M."/>
            <person name="Rost B."/>
            <person name="Ruan Y."/>
            <person name="Salzberg S.L."/>
            <person name="Sandelin A."/>
            <person name="Schneider C."/>
            <person name="Schoenbach C."/>
            <person name="Sekiguchi K."/>
            <person name="Semple C.A."/>
            <person name="Seno S."/>
            <person name="Sessa L."/>
            <person name="Sheng Y."/>
            <person name="Shibata Y."/>
            <person name="Shimada H."/>
            <person name="Shimada K."/>
            <person name="Silva D."/>
            <person name="Sinclair B."/>
            <person name="Sperling S."/>
            <person name="Stupka E."/>
            <person name="Sugiura K."/>
            <person name="Sultana R."/>
            <person name="Takenaka Y."/>
            <person name="Taki K."/>
            <person name="Tammoja K."/>
            <person name="Tan S.L."/>
            <person name="Tang S."/>
            <person name="Taylor M.S."/>
            <person name="Tegner J."/>
            <person name="Teichmann S.A."/>
            <person name="Ueda H.R."/>
            <person name="van Nimwegen E."/>
            <person name="Verardo R."/>
            <person name="Wei C.L."/>
            <person name="Yagi K."/>
            <person name="Yamanishi H."/>
            <person name="Zabarovsky E."/>
            <person name="Zhu S."/>
            <person name="Zimmer A."/>
            <person name="Hide W."/>
            <person name="Bult C."/>
            <person name="Grimmond S.M."/>
            <person name="Teasdale R.D."/>
            <person name="Liu E.T."/>
            <person name="Brusic V."/>
            <person name="Quackenbush J."/>
            <person name="Wahlestedt C."/>
            <person name="Mattick J.S."/>
            <person name="Hume D.A."/>
            <person name="Kai C."/>
            <person name="Sasaki D."/>
            <person name="Tomaru Y."/>
            <person name="Fukuda S."/>
            <person name="Kanamori-Katayama M."/>
            <person name="Suzuki M."/>
            <person name="Aoki J."/>
            <person name="Arakawa T."/>
            <person name="Iida J."/>
            <person name="Imamura K."/>
            <person name="Itoh M."/>
            <person name="Kato T."/>
            <person name="Kawaji H."/>
            <person name="Kawagashira N."/>
            <person name="Kawashima T."/>
            <person name="Kojima M."/>
            <person name="Kondo S."/>
            <person name="Konno H."/>
            <person name="Nakano K."/>
            <person name="Ninomiya N."/>
            <person name="Nishio T."/>
            <person name="Okada M."/>
            <person name="Plessy C."/>
            <person name="Shibata K."/>
            <person name="Shiraki T."/>
            <person name="Suzuki S."/>
            <person name="Tagami M."/>
            <person name="Waki K."/>
            <person name="Watahiki A."/>
            <person name="Okamura-Oho Y."/>
            <person name="Suzuki H."/>
            <person name="Kawai J."/>
            <person name="Hayashizaki Y."/>
        </authorList>
    </citation>
    <scope>NUCLEOTIDE SEQUENCE [LARGE SCALE MRNA]</scope>
    <source>
        <strain>C57BL/6J</strain>
        <tissue>Egg</tissue>
        <tissue>Submandibular gland</tissue>
        <tissue>Tongue</tissue>
    </source>
</reference>
<reference key="3">
    <citation type="journal article" date="2009" name="PLoS Biol.">
        <title>Lineage-specific biology revealed by a finished genome assembly of the mouse.</title>
        <authorList>
            <person name="Church D.M."/>
            <person name="Goodstadt L."/>
            <person name="Hillier L.W."/>
            <person name="Zody M.C."/>
            <person name="Goldstein S."/>
            <person name="She X."/>
            <person name="Bult C.J."/>
            <person name="Agarwala R."/>
            <person name="Cherry J.L."/>
            <person name="DiCuccio M."/>
            <person name="Hlavina W."/>
            <person name="Kapustin Y."/>
            <person name="Meric P."/>
            <person name="Maglott D."/>
            <person name="Birtle Z."/>
            <person name="Marques A.C."/>
            <person name="Graves T."/>
            <person name="Zhou S."/>
            <person name="Teague B."/>
            <person name="Potamousis K."/>
            <person name="Churas C."/>
            <person name="Place M."/>
            <person name="Herschleb J."/>
            <person name="Runnheim R."/>
            <person name="Forrest D."/>
            <person name="Amos-Landgraf J."/>
            <person name="Schwartz D.C."/>
            <person name="Cheng Z."/>
            <person name="Lindblad-Toh K."/>
            <person name="Eichler E.E."/>
            <person name="Ponting C.P."/>
        </authorList>
    </citation>
    <scope>NUCLEOTIDE SEQUENCE [LARGE SCALE GENOMIC DNA]</scope>
    <source>
        <strain>C57BL/6J</strain>
    </source>
</reference>
<reference key="4">
    <citation type="journal article" date="2004" name="Genome Res.">
        <title>The status, quality, and expansion of the NIH full-length cDNA project: the Mammalian Gene Collection (MGC).</title>
        <authorList>
            <consortium name="The MGC Project Team"/>
        </authorList>
    </citation>
    <scope>NUCLEOTIDE SEQUENCE [LARGE SCALE MRNA]</scope>
    <source>
        <strain>FVB/N</strain>
        <tissue>Mammary tumor</tissue>
    </source>
</reference>
<reference key="5">
    <citation type="submission" date="2009-01" db="UniProtKB">
        <authorList>
            <person name="Lubec G."/>
            <person name="Sunyer B."/>
            <person name="Chen W.-Q."/>
        </authorList>
    </citation>
    <scope>PROTEIN SEQUENCE OF 214-221</scope>
    <scope>IDENTIFICATION BY MASS SPECTROMETRY</scope>
    <source>
        <strain>OF1</strain>
        <tissue>Hippocampus</tissue>
    </source>
</reference>
<reference key="6">
    <citation type="journal article" date="2009" name="Immunity">
        <title>The phagosomal proteome in interferon-gamma-activated macrophages.</title>
        <authorList>
            <person name="Trost M."/>
            <person name="English L."/>
            <person name="Lemieux S."/>
            <person name="Courcelles M."/>
            <person name="Desjardins M."/>
            <person name="Thibault P."/>
        </authorList>
    </citation>
    <scope>PHOSPHORYLATION [LARGE SCALE ANALYSIS] AT SER-258</scope>
    <scope>IDENTIFICATION BY MASS SPECTROMETRY [LARGE SCALE ANALYSIS]</scope>
</reference>
<reference key="7">
    <citation type="journal article" date="2010" name="Cell">
        <title>A tissue-specific atlas of mouse protein phosphorylation and expression.</title>
        <authorList>
            <person name="Huttlin E.L."/>
            <person name="Jedrychowski M.P."/>
            <person name="Elias J.E."/>
            <person name="Goswami T."/>
            <person name="Rad R."/>
            <person name="Beausoleil S.A."/>
            <person name="Villen J."/>
            <person name="Haas W."/>
            <person name="Sowa M.E."/>
            <person name="Gygi S.P."/>
        </authorList>
    </citation>
    <scope>PHOSPHORYLATION [LARGE SCALE ANALYSIS] AT SER-66; SER-100; SER-251; SER-258 AND THR-265</scope>
    <scope>IDENTIFICATION BY MASS SPECTROMETRY [LARGE SCALE ANALYSIS]</scope>
    <source>
        <tissue>Brain</tissue>
        <tissue>Heart</tissue>
        <tissue>Lung</tissue>
        <tissue>Pancreas</tissue>
        <tissue>Spleen</tissue>
        <tissue>Testis</tissue>
    </source>
</reference>
<reference key="8">
    <citation type="submission" date="2005-07" db="EMBL/GenBank/DDBJ databases">
        <title>Crystal structure of the mppn domain of mouse nup35.</title>
        <authorList>
            <person name="Handa N."/>
            <person name="Murayama K."/>
            <person name="Kukimoto M."/>
            <person name="Hamana H."/>
            <person name="Uchikubo T."/>
            <person name="Takemoto C."/>
            <person name="Terada T."/>
            <person name="Shirouzu M."/>
            <person name="Yokoyama S."/>
        </authorList>
    </citation>
    <scope>X-RAY CRYSTALLOGRAPHY (2.7 ANGSTROMS) OF 156-261</scope>
</reference>